<accession>Q09965</accession>
<proteinExistence type="inferred from homology"/>
<feature type="chain" id="PRO_0000070230" description="Putative G-protein coupled receptor-like protein B0244.6">
    <location>
        <begin position="1"/>
        <end position="374"/>
    </location>
</feature>
<feature type="topological domain" description="Extracellular" evidence="1">
    <location>
        <begin position="1"/>
        <end position="54"/>
    </location>
</feature>
<feature type="transmembrane region" description="Helical; Name=1" evidence="1">
    <location>
        <begin position="55"/>
        <end position="75"/>
    </location>
</feature>
<feature type="topological domain" description="Cytoplasmic" evidence="1">
    <location>
        <begin position="76"/>
        <end position="86"/>
    </location>
</feature>
<feature type="transmembrane region" description="Helical; Name=2" evidence="1">
    <location>
        <begin position="87"/>
        <end position="107"/>
    </location>
</feature>
<feature type="topological domain" description="Extracellular" evidence="1">
    <location>
        <begin position="108"/>
        <end position="137"/>
    </location>
</feature>
<feature type="transmembrane region" description="Helical; Name=3" evidence="1">
    <location>
        <begin position="138"/>
        <end position="158"/>
    </location>
</feature>
<feature type="topological domain" description="Cytoplasmic" evidence="1">
    <location>
        <begin position="159"/>
        <end position="169"/>
    </location>
</feature>
<feature type="transmembrane region" description="Helical; Name=4" evidence="1">
    <location>
        <begin position="170"/>
        <end position="190"/>
    </location>
</feature>
<feature type="topological domain" description="Extracellular" evidence="1">
    <location>
        <begin position="191"/>
        <end position="216"/>
    </location>
</feature>
<feature type="transmembrane region" description="Helical; Name=5" evidence="1">
    <location>
        <begin position="217"/>
        <end position="237"/>
    </location>
</feature>
<feature type="topological domain" description="Cytoplasmic" evidence="1">
    <location>
        <begin position="238"/>
        <end position="262"/>
    </location>
</feature>
<feature type="transmembrane region" description="Helical; Name=6" evidence="1">
    <location>
        <begin position="263"/>
        <end position="283"/>
    </location>
</feature>
<feature type="topological domain" description="Extracellular" evidence="1">
    <location>
        <begin position="284"/>
        <end position="304"/>
    </location>
</feature>
<feature type="transmembrane region" description="Helical; Name=7" evidence="1">
    <location>
        <begin position="305"/>
        <end position="325"/>
    </location>
</feature>
<feature type="topological domain" description="Cytoplasmic" evidence="1">
    <location>
        <begin position="326"/>
        <end position="374"/>
    </location>
</feature>
<gene>
    <name type="ORF">B0244.6</name>
</gene>
<organism>
    <name type="scientific">Caenorhabditis elegans</name>
    <dbReference type="NCBI Taxonomy" id="6239"/>
    <lineage>
        <taxon>Eukaryota</taxon>
        <taxon>Metazoa</taxon>
        <taxon>Ecdysozoa</taxon>
        <taxon>Nematoda</taxon>
        <taxon>Chromadorea</taxon>
        <taxon>Rhabditida</taxon>
        <taxon>Rhabditina</taxon>
        <taxon>Rhabditomorpha</taxon>
        <taxon>Rhabditoidea</taxon>
        <taxon>Rhabditidae</taxon>
        <taxon>Peloderinae</taxon>
        <taxon>Caenorhabditis</taxon>
    </lineage>
</organism>
<comment type="subcellular location">
    <subcellularLocation>
        <location evidence="2">Cell membrane</location>
        <topology evidence="2">Multi-pass membrane protein</topology>
    </subcellularLocation>
</comment>
<comment type="similarity">
    <text evidence="2">Belongs to the G-protein coupled receptor 1 family. B0244 subfamily.</text>
</comment>
<name>YS96_CAEEL</name>
<reference key="1">
    <citation type="journal article" date="1998" name="Science">
        <title>Genome sequence of the nematode C. elegans: a platform for investigating biology.</title>
        <authorList>
            <consortium name="The C. elegans sequencing consortium"/>
        </authorList>
    </citation>
    <scope>NUCLEOTIDE SEQUENCE [LARGE SCALE GENOMIC DNA]</scope>
    <source>
        <strain>Bristol N2</strain>
    </source>
</reference>
<evidence type="ECO:0000255" key="1"/>
<evidence type="ECO:0000305" key="2"/>
<sequence>MTQNHYTTSIFANCSKHYEFEILLETCTNSTNPCHAVSQIQSAITIAYVDYYTSVALFSIAALLDIYCLIITIPLYRRMKDDSKKKYVFLITRCISGLLLVVAWLLIQCIYLRFIAPSQDNLPYYVLALALNIGSTYVLLGSYVGMAGILYLGVLNPIAFNQHLTLRIVYIAVCIIFVISIFISIPLAIFQALMTVPTSSMSCTDTACAPLITLINFVLVFGSLITTTLTLTFVLISLCRHRKEFKKLDTTSNTSLNSAVRLLKFTLFAVLLLVAAEVIPFVISETKKKHSVVTGCYYFYHSGKVIQYAVFALTESSIWSIALIIDPLINIIFDRTVSKKATDQVKWMRKSCVGLVRKVTKRSNPENFTETSEI</sequence>
<dbReference type="EMBL" id="FO080136">
    <property type="protein sequence ID" value="CCD61511.1"/>
    <property type="molecule type" value="Genomic_DNA"/>
</dbReference>
<dbReference type="PIR" id="E88465">
    <property type="entry name" value="E88465"/>
</dbReference>
<dbReference type="RefSeq" id="NP_498241.3">
    <property type="nucleotide sequence ID" value="NM_065840.4"/>
</dbReference>
<dbReference type="SMR" id="Q09965"/>
<dbReference type="FunCoup" id="Q09965">
    <property type="interactions" value="32"/>
</dbReference>
<dbReference type="PaxDb" id="6239-B0244.6"/>
<dbReference type="EnsemblMetazoa" id="B0244.6.1">
    <property type="protein sequence ID" value="B0244.6.1"/>
    <property type="gene ID" value="WBGene00015081"/>
</dbReference>
<dbReference type="GeneID" id="181877"/>
<dbReference type="KEGG" id="cel:CELE_B0244.6"/>
<dbReference type="UCSC" id="B0244.6">
    <property type="organism name" value="c. elegans"/>
</dbReference>
<dbReference type="AGR" id="WB:WBGene00015081"/>
<dbReference type="CTD" id="181877"/>
<dbReference type="WormBase" id="B0244.6">
    <property type="protein sequence ID" value="CE46269"/>
    <property type="gene ID" value="WBGene00015081"/>
</dbReference>
<dbReference type="eggNOG" id="ENOG502TG7R">
    <property type="taxonomic scope" value="Eukaryota"/>
</dbReference>
<dbReference type="GeneTree" id="ENSGT00970000195911"/>
<dbReference type="HOGENOM" id="CLU_047461_0_0_1"/>
<dbReference type="InParanoid" id="Q09965"/>
<dbReference type="OMA" id="WFYHANI"/>
<dbReference type="OrthoDB" id="5815876at2759"/>
<dbReference type="PhylomeDB" id="Q09965"/>
<dbReference type="PRO" id="PR:Q09965"/>
<dbReference type="Proteomes" id="UP000001940">
    <property type="component" value="Chromosome III"/>
</dbReference>
<dbReference type="Bgee" id="WBGene00015081">
    <property type="expression patterns" value="Expressed in adult organism and 1 other cell type or tissue"/>
</dbReference>
<dbReference type="GO" id="GO:0005886">
    <property type="term" value="C:plasma membrane"/>
    <property type="evidence" value="ECO:0007669"/>
    <property type="project" value="UniProtKB-SubCell"/>
</dbReference>
<dbReference type="GO" id="GO:0004930">
    <property type="term" value="F:G protein-coupled receptor activity"/>
    <property type="evidence" value="ECO:0007669"/>
    <property type="project" value="UniProtKB-KW"/>
</dbReference>
<dbReference type="Gene3D" id="1.20.1070.10">
    <property type="entry name" value="Rhodopsin 7-helix transmembrane proteins"/>
    <property type="match status" value="1"/>
</dbReference>
<dbReference type="InterPro" id="IPR040435">
    <property type="entry name" value="Put_GPCR_Chromadorea"/>
</dbReference>
<dbReference type="PANTHER" id="PTHR37441:SF1">
    <property type="entry name" value="G-PROTEIN COUPLED RECEPTOR-LIKE PROTEIN B0244.6-RELATED"/>
    <property type="match status" value="1"/>
</dbReference>
<dbReference type="PANTHER" id="PTHR37441">
    <property type="entry name" value="PROTEIN CBG16518"/>
    <property type="match status" value="1"/>
</dbReference>
<dbReference type="SUPFAM" id="SSF81321">
    <property type="entry name" value="Family A G protein-coupled receptor-like"/>
    <property type="match status" value="1"/>
</dbReference>
<keyword id="KW-1003">Cell membrane</keyword>
<keyword id="KW-0297">G-protein coupled receptor</keyword>
<keyword id="KW-0472">Membrane</keyword>
<keyword id="KW-0675">Receptor</keyword>
<keyword id="KW-1185">Reference proteome</keyword>
<keyword id="KW-0807">Transducer</keyword>
<keyword id="KW-0812">Transmembrane</keyword>
<keyword id="KW-1133">Transmembrane helix</keyword>
<protein>
    <recommendedName>
        <fullName>Putative G-protein coupled receptor-like protein B0244.6</fullName>
    </recommendedName>
</protein>